<proteinExistence type="predicted"/>
<sequence length="91" mass="10972">MDLLYLSSFRSRHYHQHSLAAYDTAEYWTCPIEMLHLQTEKRGTADIFRQYECRYIKTNFPFCYCTFNKYRTCGIFCITNFSAVRIINPFV</sequence>
<protein>
    <recommendedName>
        <fullName>Protein xpaR7</fullName>
    </recommendedName>
</protein>
<name>XPR7_BACLI</name>
<feature type="chain" id="PRO_0000066039" description="Protein xpaR7">
    <location>
        <begin position="1"/>
        <end position="91"/>
    </location>
</feature>
<gene>
    <name type="primary">xpaR7</name>
</gene>
<accession>Q99166</accession>
<reference key="1">
    <citation type="journal article" date="1991" name="J. Gen. Microbiol.">
        <title>Identification of four unique clones encoding 10 kDa proteins from Bacillus that cause phenotypic complementation of a phoA mutant strain of Escherichia coli.</title>
        <authorList>
            <person name="Lee J.W.K."/>
            <person name="Edwards C.W."/>
            <person name="Hulett F.M."/>
        </authorList>
    </citation>
    <scope>NUCLEOTIDE SEQUENCE [GENOMIC DNA]</scope>
    <source>
        <strain>MC14</strain>
    </source>
</reference>
<dbReference type="EMBL" id="M63942">
    <property type="protein sequence ID" value="AAA22885.1"/>
    <property type="molecule type" value="Genomic_DNA"/>
</dbReference>
<dbReference type="PIR" id="A49754">
    <property type="entry name" value="A49754"/>
</dbReference>
<organism>
    <name type="scientific">Bacillus licheniformis</name>
    <dbReference type="NCBI Taxonomy" id="1402"/>
    <lineage>
        <taxon>Bacteria</taxon>
        <taxon>Bacillati</taxon>
        <taxon>Bacillota</taxon>
        <taxon>Bacilli</taxon>
        <taxon>Bacillales</taxon>
        <taxon>Bacillaceae</taxon>
        <taxon>Bacillus</taxon>
    </lineage>
</organism>